<evidence type="ECO:0000255" key="1">
    <source>
        <dbReference type="HAMAP-Rule" id="MF_00575"/>
    </source>
</evidence>
<sequence length="239" mass="27088">MRTLFIGDLHLSADRLDITQAFNRFLDTELDDADALYILGDLFEVWVGDDLAAPFALELARRLKQISQRLPIYFIHGNRDFMLGKQFADAAGMQILPEVTCLDLYGVNTVILHGDSMCTLDKAYQRFRKLRSFAFARWLYSCLPKRKRQAIADKIRSNSQSSNQQKSYVIMDVEPSAVDALFAQTHCKQMIHGHTHRPAIHNFTNGCKRIVVGDWYEQGSVLVVSADGVDLKSLPFDAS</sequence>
<reference key="1">
    <citation type="submission" date="2006-08" db="EMBL/GenBank/DDBJ databases">
        <title>Complete sequence of chromosome 1 of Shewanella sp. MR-7.</title>
        <authorList>
            <person name="Copeland A."/>
            <person name="Lucas S."/>
            <person name="Lapidus A."/>
            <person name="Barry K."/>
            <person name="Detter J.C."/>
            <person name="Glavina del Rio T."/>
            <person name="Hammon N."/>
            <person name="Israni S."/>
            <person name="Dalin E."/>
            <person name="Tice H."/>
            <person name="Pitluck S."/>
            <person name="Kiss H."/>
            <person name="Brettin T."/>
            <person name="Bruce D."/>
            <person name="Han C."/>
            <person name="Tapia R."/>
            <person name="Gilna P."/>
            <person name="Schmutz J."/>
            <person name="Larimer F."/>
            <person name="Land M."/>
            <person name="Hauser L."/>
            <person name="Kyrpides N."/>
            <person name="Mikhailova N."/>
            <person name="Nealson K."/>
            <person name="Konstantinidis K."/>
            <person name="Klappenbach J."/>
            <person name="Tiedje J."/>
            <person name="Richardson P."/>
        </authorList>
    </citation>
    <scope>NUCLEOTIDE SEQUENCE [LARGE SCALE GENOMIC DNA]</scope>
    <source>
        <strain>MR-7</strain>
    </source>
</reference>
<comment type="function">
    <text evidence="1">Hydrolyzes the pyrophosphate bond of UDP-2,3-diacylglucosamine to yield 2,3-diacylglucosamine 1-phosphate (lipid X) and UMP by catalyzing the attack of water at the alpha-P atom. Involved in the biosynthesis of lipid A, a phosphorylated glycolipid that anchors the lipopolysaccharide to the outer membrane of the cell.</text>
</comment>
<comment type="catalytic activity">
    <reaction evidence="1">
        <text>UDP-2-N,3-O-bis[(3R)-3-hydroxytetradecanoyl]-alpha-D-glucosamine + H2O = 2-N,3-O-bis[(3R)-3-hydroxytetradecanoyl]-alpha-D-glucosaminyl 1-phosphate + UMP + 2 H(+)</text>
        <dbReference type="Rhea" id="RHEA:25213"/>
        <dbReference type="ChEBI" id="CHEBI:15377"/>
        <dbReference type="ChEBI" id="CHEBI:15378"/>
        <dbReference type="ChEBI" id="CHEBI:57865"/>
        <dbReference type="ChEBI" id="CHEBI:57957"/>
        <dbReference type="ChEBI" id="CHEBI:78847"/>
        <dbReference type="EC" id="3.6.1.54"/>
    </reaction>
</comment>
<comment type="cofactor">
    <cofactor evidence="1">
        <name>Mn(2+)</name>
        <dbReference type="ChEBI" id="CHEBI:29035"/>
    </cofactor>
    <text evidence="1">Binds 2 Mn(2+) ions per subunit in a binuclear metal center.</text>
</comment>
<comment type="pathway">
    <text evidence="1">Glycolipid biosynthesis; lipid IV(A) biosynthesis; lipid IV(A) from (3R)-3-hydroxytetradecanoyl-[acyl-carrier-protein] and UDP-N-acetyl-alpha-D-glucosamine: step 4/6.</text>
</comment>
<comment type="subcellular location">
    <subcellularLocation>
        <location evidence="1">Cell inner membrane</location>
        <topology evidence="1">Peripheral membrane protein</topology>
        <orientation evidence="1">Cytoplasmic side</orientation>
    </subcellularLocation>
</comment>
<comment type="similarity">
    <text evidence="1">Belongs to the LpxH family.</text>
</comment>
<dbReference type="EC" id="3.6.1.54" evidence="1"/>
<dbReference type="EMBL" id="CP000444">
    <property type="protein sequence ID" value="ABI43553.1"/>
    <property type="molecule type" value="Genomic_DNA"/>
</dbReference>
<dbReference type="SMR" id="Q0HTK2"/>
<dbReference type="KEGG" id="shm:Shewmr7_2568"/>
<dbReference type="HOGENOM" id="CLU_074586_0_0_6"/>
<dbReference type="UniPathway" id="UPA00359">
    <property type="reaction ID" value="UER00480"/>
</dbReference>
<dbReference type="GO" id="GO:0005737">
    <property type="term" value="C:cytoplasm"/>
    <property type="evidence" value="ECO:0007669"/>
    <property type="project" value="InterPro"/>
</dbReference>
<dbReference type="GO" id="GO:0019897">
    <property type="term" value="C:extrinsic component of plasma membrane"/>
    <property type="evidence" value="ECO:0007669"/>
    <property type="project" value="UniProtKB-UniRule"/>
</dbReference>
<dbReference type="GO" id="GO:0030145">
    <property type="term" value="F:manganese ion binding"/>
    <property type="evidence" value="ECO:0007669"/>
    <property type="project" value="UniProtKB-UniRule"/>
</dbReference>
<dbReference type="GO" id="GO:0008758">
    <property type="term" value="F:UDP-2,3-diacylglucosamine hydrolase activity"/>
    <property type="evidence" value="ECO:0007669"/>
    <property type="project" value="UniProtKB-UniRule"/>
</dbReference>
<dbReference type="GO" id="GO:0009245">
    <property type="term" value="P:lipid A biosynthetic process"/>
    <property type="evidence" value="ECO:0007669"/>
    <property type="project" value="UniProtKB-UniRule"/>
</dbReference>
<dbReference type="CDD" id="cd07398">
    <property type="entry name" value="MPP_YbbF-LpxH"/>
    <property type="match status" value="1"/>
</dbReference>
<dbReference type="Gene3D" id="3.60.21.10">
    <property type="match status" value="1"/>
</dbReference>
<dbReference type="HAMAP" id="MF_00575">
    <property type="entry name" value="LpxH"/>
    <property type="match status" value="1"/>
</dbReference>
<dbReference type="InterPro" id="IPR004843">
    <property type="entry name" value="Calcineurin-like_PHP_ApaH"/>
</dbReference>
<dbReference type="InterPro" id="IPR043461">
    <property type="entry name" value="LpxH-like"/>
</dbReference>
<dbReference type="InterPro" id="IPR029052">
    <property type="entry name" value="Metallo-depent_PP-like"/>
</dbReference>
<dbReference type="InterPro" id="IPR010138">
    <property type="entry name" value="UDP-diacylglucosamine_Hdrlase"/>
</dbReference>
<dbReference type="NCBIfam" id="TIGR01854">
    <property type="entry name" value="lipid_A_lpxH"/>
    <property type="match status" value="1"/>
</dbReference>
<dbReference type="NCBIfam" id="NF003743">
    <property type="entry name" value="PRK05340.1"/>
    <property type="match status" value="1"/>
</dbReference>
<dbReference type="PANTHER" id="PTHR34990:SF1">
    <property type="entry name" value="UDP-2,3-DIACYLGLUCOSAMINE HYDROLASE"/>
    <property type="match status" value="1"/>
</dbReference>
<dbReference type="PANTHER" id="PTHR34990">
    <property type="entry name" value="UDP-2,3-DIACYLGLUCOSAMINE HYDROLASE-RELATED"/>
    <property type="match status" value="1"/>
</dbReference>
<dbReference type="Pfam" id="PF00149">
    <property type="entry name" value="Metallophos"/>
    <property type="match status" value="1"/>
</dbReference>
<dbReference type="SUPFAM" id="SSF56300">
    <property type="entry name" value="Metallo-dependent phosphatases"/>
    <property type="match status" value="1"/>
</dbReference>
<organism>
    <name type="scientific">Shewanella sp. (strain MR-7)</name>
    <dbReference type="NCBI Taxonomy" id="60481"/>
    <lineage>
        <taxon>Bacteria</taxon>
        <taxon>Pseudomonadati</taxon>
        <taxon>Pseudomonadota</taxon>
        <taxon>Gammaproteobacteria</taxon>
        <taxon>Alteromonadales</taxon>
        <taxon>Shewanellaceae</taxon>
        <taxon>Shewanella</taxon>
    </lineage>
</organism>
<proteinExistence type="inferred from homology"/>
<name>LPXH_SHESR</name>
<keyword id="KW-0997">Cell inner membrane</keyword>
<keyword id="KW-1003">Cell membrane</keyword>
<keyword id="KW-0378">Hydrolase</keyword>
<keyword id="KW-0441">Lipid A biosynthesis</keyword>
<keyword id="KW-0444">Lipid biosynthesis</keyword>
<keyword id="KW-0443">Lipid metabolism</keyword>
<keyword id="KW-0464">Manganese</keyword>
<keyword id="KW-0472">Membrane</keyword>
<keyword id="KW-0479">Metal-binding</keyword>
<gene>
    <name evidence="1" type="primary">lpxH</name>
    <name type="ordered locus">Shewmr7_2568</name>
</gene>
<feature type="chain" id="PRO_1000025088" description="UDP-2,3-diacylglucosamine hydrolase">
    <location>
        <begin position="1"/>
        <end position="239"/>
    </location>
</feature>
<feature type="binding site" evidence="1">
    <location>
        <position position="8"/>
    </location>
    <ligand>
        <name>Mn(2+)</name>
        <dbReference type="ChEBI" id="CHEBI:29035"/>
        <label>1</label>
    </ligand>
</feature>
<feature type="binding site" evidence="1">
    <location>
        <position position="10"/>
    </location>
    <ligand>
        <name>Mn(2+)</name>
        <dbReference type="ChEBI" id="CHEBI:29035"/>
        <label>1</label>
    </ligand>
</feature>
<feature type="binding site" evidence="1">
    <location>
        <position position="41"/>
    </location>
    <ligand>
        <name>Mn(2+)</name>
        <dbReference type="ChEBI" id="CHEBI:29035"/>
        <label>1</label>
    </ligand>
</feature>
<feature type="binding site" evidence="1">
    <location>
        <position position="41"/>
    </location>
    <ligand>
        <name>Mn(2+)</name>
        <dbReference type="ChEBI" id="CHEBI:29035"/>
        <label>2</label>
    </ligand>
</feature>
<feature type="binding site" evidence="1">
    <location>
        <begin position="78"/>
        <end position="79"/>
    </location>
    <ligand>
        <name>substrate</name>
    </ligand>
</feature>
<feature type="binding site" evidence="1">
    <location>
        <position position="78"/>
    </location>
    <ligand>
        <name>Mn(2+)</name>
        <dbReference type="ChEBI" id="CHEBI:29035"/>
        <label>2</label>
    </ligand>
</feature>
<feature type="binding site" evidence="1">
    <location>
        <position position="113"/>
    </location>
    <ligand>
        <name>Mn(2+)</name>
        <dbReference type="ChEBI" id="CHEBI:29035"/>
        <label>2</label>
    </ligand>
</feature>
<feature type="binding site" evidence="1">
    <location>
        <position position="121"/>
    </location>
    <ligand>
        <name>substrate</name>
    </ligand>
</feature>
<feature type="binding site" evidence="1">
    <location>
        <position position="159"/>
    </location>
    <ligand>
        <name>substrate</name>
    </ligand>
</feature>
<feature type="binding site" evidence="1">
    <location>
        <position position="163"/>
    </location>
    <ligand>
        <name>substrate</name>
    </ligand>
</feature>
<feature type="binding site" evidence="1">
    <location>
        <position position="166"/>
    </location>
    <ligand>
        <name>substrate</name>
    </ligand>
</feature>
<feature type="binding site" evidence="1">
    <location>
        <position position="194"/>
    </location>
    <ligand>
        <name>Mn(2+)</name>
        <dbReference type="ChEBI" id="CHEBI:29035"/>
        <label>2</label>
    </ligand>
</feature>
<feature type="binding site" evidence="1">
    <location>
        <position position="194"/>
    </location>
    <ligand>
        <name>substrate</name>
    </ligand>
</feature>
<feature type="binding site" evidence="1">
    <location>
        <position position="196"/>
    </location>
    <ligand>
        <name>Mn(2+)</name>
        <dbReference type="ChEBI" id="CHEBI:29035"/>
        <label>1</label>
    </ligand>
</feature>
<accession>Q0HTK2</accession>
<protein>
    <recommendedName>
        <fullName evidence="1">UDP-2,3-diacylglucosamine hydrolase</fullName>
        <ecNumber evidence="1">3.6.1.54</ecNumber>
    </recommendedName>
    <alternativeName>
        <fullName evidence="1">UDP-2,3-diacylglucosamine diphosphatase</fullName>
    </alternativeName>
</protein>